<gene>
    <name type="primary">ITA</name>
    <name type="synonym">IAP1</name>
</gene>
<proteinExistence type="evidence at transcript level"/>
<sequence>MNIMDSSPLLASVMKQNAHCGELKYDFSCELYRMSTFSTFPVNVPVSERRLARAGFYYTGVQDKVKCFSCGLVLDNWQPGDNAMEKHKQVYPSCSFVQNMLSLNNLGLSTHSAFSPLVASNLSPSLRSMTLSPSFEQVGYFSGSFSSFPRDPVTTRAAEDLSHLRSKLQNPSMSTEEARLRTSHAWPLMCLWPAEVAKAGLDDLGTADKVACVNCGVKLSNWEPKDNAMSEHRRHFPNCPFVENLMRDQPSFNVSNVTMQTHEARVKTFINWPTRIPVQPEQLADAGFYYVGRNDDVKCFCCDGGLRCWESGDDPWIEHAKWFPRCEYLLRVKGGEFVSQVQARFPHLLWNSSCTTSDKPVDENMDPIIHFEPGESPSEDAIMMNTPVVKAALEMGFSRRLIKQTVQSKILATEENYKTVNDLVSELLTAEDEKREEEKERQFEEVASDDLSLIRKNRMALFQRLTSVLPILGSLLSAKVITELEHDVIKQTTQTPSQARELIDTVLVKGNAAASIFRNCLKDFDPVLYKDLFVEKSMKYVPTEDVSGLPMEEQLRRLQEERTCKVCMDKEVSIVFIPCGHLVVCKECAPSLRKCPICRGTIKGTVRTFLS</sequence>
<organism>
    <name type="scientific">Gallus gallus</name>
    <name type="common">Chicken</name>
    <dbReference type="NCBI Taxonomy" id="9031"/>
    <lineage>
        <taxon>Eukaryota</taxon>
        <taxon>Metazoa</taxon>
        <taxon>Chordata</taxon>
        <taxon>Craniata</taxon>
        <taxon>Vertebrata</taxon>
        <taxon>Euteleostomi</taxon>
        <taxon>Archelosauria</taxon>
        <taxon>Archosauria</taxon>
        <taxon>Dinosauria</taxon>
        <taxon>Saurischia</taxon>
        <taxon>Theropoda</taxon>
        <taxon>Coelurosauria</taxon>
        <taxon>Aves</taxon>
        <taxon>Neognathae</taxon>
        <taxon>Galloanserae</taxon>
        <taxon>Galliformes</taxon>
        <taxon>Phasianidae</taxon>
        <taxon>Phasianinae</taxon>
        <taxon>Gallus</taxon>
    </lineage>
</organism>
<dbReference type="EMBL" id="U27466">
    <property type="protein sequence ID" value="AAB48118.1"/>
    <property type="molecule type" value="mRNA"/>
</dbReference>
<dbReference type="EMBL" id="AF008592">
    <property type="protein sequence ID" value="AAB88044.1"/>
    <property type="molecule type" value="mRNA"/>
</dbReference>
<dbReference type="RefSeq" id="NP_001007823.1">
    <property type="nucleotide sequence ID" value="NM_001007822.1"/>
</dbReference>
<dbReference type="SMR" id="Q90660"/>
<dbReference type="FunCoup" id="Q90660">
    <property type="interactions" value="1846"/>
</dbReference>
<dbReference type="STRING" id="9031.ENSGALP00000035646"/>
<dbReference type="MEROPS" id="I32.002"/>
<dbReference type="PaxDb" id="9031-ENSGALP00000035646"/>
<dbReference type="GeneID" id="374012"/>
<dbReference type="KEGG" id="gga:374012"/>
<dbReference type="CTD" id="329"/>
<dbReference type="VEuPathDB" id="HostDB:geneid_374012"/>
<dbReference type="eggNOG" id="KOG1101">
    <property type="taxonomic scope" value="Eukaryota"/>
</dbReference>
<dbReference type="HOGENOM" id="CLU_016347_1_1_1"/>
<dbReference type="InParanoid" id="Q90660"/>
<dbReference type="OrthoDB" id="4034597at2759"/>
<dbReference type="PhylomeDB" id="Q90660"/>
<dbReference type="TreeFam" id="TF105356"/>
<dbReference type="PRO" id="PR:Q90660"/>
<dbReference type="Proteomes" id="UP000000539">
    <property type="component" value="Unassembled WGS sequence"/>
</dbReference>
<dbReference type="GO" id="GO:0005737">
    <property type="term" value="C:cytoplasm"/>
    <property type="evidence" value="ECO:0000318"/>
    <property type="project" value="GO_Central"/>
</dbReference>
<dbReference type="GO" id="GO:0005634">
    <property type="term" value="C:nucleus"/>
    <property type="evidence" value="ECO:0000318"/>
    <property type="project" value="GO_Central"/>
</dbReference>
<dbReference type="GO" id="GO:0043027">
    <property type="term" value="F:cysteine-type endopeptidase inhibitor activity involved in apoptotic process"/>
    <property type="evidence" value="ECO:0000318"/>
    <property type="project" value="GO_Central"/>
</dbReference>
<dbReference type="GO" id="GO:0061630">
    <property type="term" value="F:ubiquitin protein ligase activity"/>
    <property type="evidence" value="ECO:0000318"/>
    <property type="project" value="GO_Central"/>
</dbReference>
<dbReference type="GO" id="GO:0008270">
    <property type="term" value="F:zinc ion binding"/>
    <property type="evidence" value="ECO:0007669"/>
    <property type="project" value="UniProtKB-KW"/>
</dbReference>
<dbReference type="GO" id="GO:0006915">
    <property type="term" value="P:apoptotic process"/>
    <property type="evidence" value="ECO:0007669"/>
    <property type="project" value="UniProtKB-KW"/>
</dbReference>
<dbReference type="GO" id="GO:0043066">
    <property type="term" value="P:negative regulation of apoptotic process"/>
    <property type="evidence" value="ECO:0000314"/>
    <property type="project" value="AgBase"/>
</dbReference>
<dbReference type="GO" id="GO:0060546">
    <property type="term" value="P:negative regulation of necroptotic process"/>
    <property type="evidence" value="ECO:0000318"/>
    <property type="project" value="GO_Central"/>
</dbReference>
<dbReference type="GO" id="GO:0031398">
    <property type="term" value="P:positive regulation of protein ubiquitination"/>
    <property type="evidence" value="ECO:0000318"/>
    <property type="project" value="GO_Central"/>
</dbReference>
<dbReference type="GO" id="GO:0051726">
    <property type="term" value="P:regulation of cell cycle"/>
    <property type="evidence" value="ECO:0000318"/>
    <property type="project" value="GO_Central"/>
</dbReference>
<dbReference type="CDD" id="cd00022">
    <property type="entry name" value="BIR"/>
    <property type="match status" value="3"/>
</dbReference>
<dbReference type="CDD" id="cd08329">
    <property type="entry name" value="CARD_BIRC2_BIRC3"/>
    <property type="match status" value="1"/>
</dbReference>
<dbReference type="CDD" id="cd16713">
    <property type="entry name" value="RING-HC_BIRC2_3_7"/>
    <property type="match status" value="1"/>
</dbReference>
<dbReference type="CDD" id="cd14394">
    <property type="entry name" value="UBA_BIRC2_3"/>
    <property type="match status" value="1"/>
</dbReference>
<dbReference type="FunFam" id="1.10.1170.10:FF:000005">
    <property type="entry name" value="Baculoviral IAP repeat containing 2"/>
    <property type="match status" value="1"/>
</dbReference>
<dbReference type="FunFam" id="1.10.1170.10:FF:000006">
    <property type="entry name" value="Baculoviral IAP repeat containing 2"/>
    <property type="match status" value="1"/>
</dbReference>
<dbReference type="FunFam" id="1.10.1170.10:FF:000010">
    <property type="entry name" value="Baculoviral IAP repeat containing 2"/>
    <property type="match status" value="1"/>
</dbReference>
<dbReference type="FunFam" id="3.30.40.10:FF:000184">
    <property type="entry name" value="Baculoviral IAP repeat containing 2"/>
    <property type="match status" value="1"/>
</dbReference>
<dbReference type="FunFam" id="1.10.1170.10:FF:000002">
    <property type="entry name" value="Baculoviral IAP repeat containing 7"/>
    <property type="match status" value="1"/>
</dbReference>
<dbReference type="FunFam" id="1.10.533.10:FF:000012">
    <property type="entry name" value="baculoviral IAP repeat-containing protein 2"/>
    <property type="match status" value="1"/>
</dbReference>
<dbReference type="FunFam" id="1.10.8.10:FF:000035">
    <property type="entry name" value="baculoviral IAP repeat-containing protein 2"/>
    <property type="match status" value="1"/>
</dbReference>
<dbReference type="Gene3D" id="1.10.533.10">
    <property type="entry name" value="Death Domain, Fas"/>
    <property type="match status" value="1"/>
</dbReference>
<dbReference type="Gene3D" id="1.10.8.10">
    <property type="entry name" value="DNA helicase RuvA subunit, C-terminal domain"/>
    <property type="match status" value="1"/>
</dbReference>
<dbReference type="Gene3D" id="1.10.1170.10">
    <property type="entry name" value="Inhibitor Of Apoptosis Protein (2mihbC-IAP-1), Chain A"/>
    <property type="match status" value="3"/>
</dbReference>
<dbReference type="InterPro" id="IPR001370">
    <property type="entry name" value="BIR_rpt"/>
</dbReference>
<dbReference type="InterPro" id="IPR048875">
    <property type="entry name" value="BIRC2-3-like_UBA"/>
</dbReference>
<dbReference type="InterPro" id="IPR041933">
    <property type="entry name" value="BIRC2/BIRC3_UBA"/>
</dbReference>
<dbReference type="InterPro" id="IPR001315">
    <property type="entry name" value="CARD"/>
</dbReference>
<dbReference type="InterPro" id="IPR011029">
    <property type="entry name" value="DEATH-like_dom_sf"/>
</dbReference>
<dbReference type="InterPro" id="IPR050784">
    <property type="entry name" value="IAP"/>
</dbReference>
<dbReference type="InterPro" id="IPR001841">
    <property type="entry name" value="Znf_RING"/>
</dbReference>
<dbReference type="PANTHER" id="PTHR10044:SF79">
    <property type="entry name" value="BACULOVIRAL IAP REPEAT-CONTAINING PROTEIN 2"/>
    <property type="match status" value="1"/>
</dbReference>
<dbReference type="PANTHER" id="PTHR10044">
    <property type="entry name" value="INHIBITOR OF APOPTOSIS"/>
    <property type="match status" value="1"/>
</dbReference>
<dbReference type="Pfam" id="PF00653">
    <property type="entry name" value="BIR"/>
    <property type="match status" value="3"/>
</dbReference>
<dbReference type="Pfam" id="PF00619">
    <property type="entry name" value="CARD"/>
    <property type="match status" value="1"/>
</dbReference>
<dbReference type="Pfam" id="PF21290">
    <property type="entry name" value="UBA_BIRC2-3"/>
    <property type="match status" value="1"/>
</dbReference>
<dbReference type="Pfam" id="PF13920">
    <property type="entry name" value="zf-C3HC4_3"/>
    <property type="match status" value="1"/>
</dbReference>
<dbReference type="SMART" id="SM00238">
    <property type="entry name" value="BIR"/>
    <property type="match status" value="3"/>
</dbReference>
<dbReference type="SMART" id="SM00114">
    <property type="entry name" value="CARD"/>
    <property type="match status" value="1"/>
</dbReference>
<dbReference type="SMART" id="SM00184">
    <property type="entry name" value="RING"/>
    <property type="match status" value="1"/>
</dbReference>
<dbReference type="SUPFAM" id="SSF47986">
    <property type="entry name" value="DEATH domain"/>
    <property type="match status" value="1"/>
</dbReference>
<dbReference type="SUPFAM" id="SSF57924">
    <property type="entry name" value="Inhibitor of apoptosis (IAP) repeat"/>
    <property type="match status" value="3"/>
</dbReference>
<dbReference type="PROSITE" id="PS01282">
    <property type="entry name" value="BIR_REPEAT_1"/>
    <property type="match status" value="3"/>
</dbReference>
<dbReference type="PROSITE" id="PS50143">
    <property type="entry name" value="BIR_REPEAT_2"/>
    <property type="match status" value="3"/>
</dbReference>
<dbReference type="PROSITE" id="PS50209">
    <property type="entry name" value="CARD"/>
    <property type="match status" value="1"/>
</dbReference>
<dbReference type="PROSITE" id="PS50089">
    <property type="entry name" value="ZF_RING_2"/>
    <property type="match status" value="1"/>
</dbReference>
<evidence type="ECO:0000255" key="1">
    <source>
        <dbReference type="PROSITE-ProRule" id="PRU00029"/>
    </source>
</evidence>
<evidence type="ECO:0000255" key="2">
    <source>
        <dbReference type="PROSITE-ProRule" id="PRU00046"/>
    </source>
</evidence>
<evidence type="ECO:0000255" key="3">
    <source>
        <dbReference type="PROSITE-ProRule" id="PRU00175"/>
    </source>
</evidence>
<evidence type="ECO:0000305" key="4"/>
<accession>Q90660</accession>
<accession>O57319</accession>
<protein>
    <recommendedName>
        <fullName>Inhibitor of apoptosis protein</fullName>
        <shortName>IAP</shortName>
    </recommendedName>
    <alternativeName>
        <fullName>Inhibitor of T-cell apoptosis protein</fullName>
    </alternativeName>
</protein>
<keyword id="KW-0053">Apoptosis</keyword>
<keyword id="KW-0963">Cytoplasm</keyword>
<keyword id="KW-0479">Metal-binding</keyword>
<keyword id="KW-0539">Nucleus</keyword>
<keyword id="KW-1185">Reference proteome</keyword>
<keyword id="KW-0677">Repeat</keyword>
<keyword id="KW-0862">Zinc</keyword>
<keyword id="KW-0863">Zinc-finger</keyword>
<name>BIR_CHICK</name>
<reference key="1">
    <citation type="journal article" date="1996" name="DNA Cell Biol.">
        <title>ITA, a vertebrate homologue of IAP that is expressed in T lymphocytes.</title>
        <authorList>
            <person name="Digby M.R."/>
            <person name="Kimpton W.G."/>
            <person name="York J.J."/>
            <person name="Connick T.E."/>
            <person name="Lowenthal J.W."/>
        </authorList>
    </citation>
    <scope>NUCLEOTIDE SEQUENCE [MRNA]</scope>
    <source>
        <tissue>Spleen</tissue>
    </source>
</reference>
<reference key="2">
    <citation type="journal article" date="1997" name="Mol. Cell. Biol.">
        <title>ch-IAP1, a member of the inhibitor-of-apoptosis protein family, is a mediator of the antiapoptotic activity of the v-Rel oncoprotein.</title>
        <authorList>
            <person name="You M."/>
            <person name="Ku P.-T."/>
            <person name="Hrdlickova R."/>
            <person name="Bose H.R. Jr."/>
        </authorList>
    </citation>
    <scope>NUCLEOTIDE SEQUENCE [MRNA]</scope>
    <source>
        <strain>White leghorn</strain>
        <tissue>Embryonic fibroblast</tissue>
    </source>
</reference>
<feature type="chain" id="PRO_0000122351" description="Inhibitor of apoptosis protein">
    <location>
        <begin position="1"/>
        <end position="611"/>
    </location>
</feature>
<feature type="repeat" description="BIR 1">
    <location>
        <begin position="30"/>
        <end position="97"/>
    </location>
</feature>
<feature type="repeat" description="BIR 2">
    <location>
        <begin position="176"/>
        <end position="242"/>
    </location>
</feature>
<feature type="repeat" description="BIR 3">
    <location>
        <begin position="262"/>
        <end position="329"/>
    </location>
</feature>
<feature type="domain" description="CARD" evidence="2">
    <location>
        <begin position="446"/>
        <end position="536"/>
    </location>
</feature>
<feature type="zinc finger region" description="RING-type" evidence="3">
    <location>
        <begin position="564"/>
        <end position="599"/>
    </location>
</feature>
<feature type="binding site" evidence="1">
    <location>
        <position position="299"/>
    </location>
    <ligand>
        <name>Zn(2+)</name>
        <dbReference type="ChEBI" id="CHEBI:29105"/>
    </ligand>
</feature>
<feature type="binding site" evidence="1">
    <location>
        <position position="302"/>
    </location>
    <ligand>
        <name>Zn(2+)</name>
        <dbReference type="ChEBI" id="CHEBI:29105"/>
    </ligand>
</feature>
<feature type="binding site" evidence="1">
    <location>
        <position position="319"/>
    </location>
    <ligand>
        <name>Zn(2+)</name>
        <dbReference type="ChEBI" id="CHEBI:29105"/>
    </ligand>
</feature>
<feature type="binding site" evidence="1">
    <location>
        <position position="326"/>
    </location>
    <ligand>
        <name>Zn(2+)</name>
        <dbReference type="ChEBI" id="CHEBI:29105"/>
    </ligand>
</feature>
<feature type="sequence conflict" description="In Ref. 2; AAB88044." evidence="4" ref="2">
    <original>F</original>
    <variation>L</variation>
    <location>
        <position position="27"/>
    </location>
</feature>
<feature type="sequence conflict" description="In Ref. 2; AAB88044." evidence="4" ref="2">
    <original>R</original>
    <variation>Q</variation>
    <location>
        <position position="150"/>
    </location>
</feature>
<feature type="sequence conflict" description="In Ref. 2; AAB88044." evidence="4" ref="2">
    <original>Q</original>
    <variation>H</variation>
    <location>
        <position position="169"/>
    </location>
</feature>
<feature type="sequence conflict" description="In Ref. 2; AAB88044." evidence="4" ref="2">
    <original>S</original>
    <variation>F</variation>
    <location>
        <position position="183"/>
    </location>
</feature>
<feature type="sequence conflict" description="In Ref. 2; AAB88044." evidence="4" ref="2">
    <original>CLW</original>
    <variation>FLS</variation>
    <location>
        <begin position="190"/>
        <end position="192"/>
    </location>
</feature>
<feature type="sequence conflict" description="In Ref. 2; AAB88044." evidence="4" ref="2">
    <original>V</original>
    <variation>L</variation>
    <location>
        <position position="196"/>
    </location>
</feature>
<feature type="sequence conflict" description="In Ref. 2; AAB88044." evidence="4" ref="2">
    <original>DD</original>
    <variation>YY</variation>
    <location>
        <begin position="202"/>
        <end position="203"/>
    </location>
</feature>
<feature type="sequence conflict" description="In Ref. 2; AAB88044." evidence="4" ref="2">
    <original>VN</original>
    <variation>FT</variation>
    <location>
        <begin position="213"/>
        <end position="214"/>
    </location>
</feature>
<feature type="sequence conflict" description="In Ref. 2; AAB88044." evidence="4" ref="2">
    <original>VK</original>
    <variation>GQ</variation>
    <location>
        <begin position="217"/>
        <end position="218"/>
    </location>
</feature>
<feature type="sequence conflict" description="In Ref. 2; AAB88044." evidence="4" ref="2">
    <original>WNSSCT</original>
    <variation>EQLLS</variation>
    <location>
        <begin position="350"/>
        <end position="355"/>
    </location>
</feature>
<feature type="sequence conflict" description="In Ref. 2; AAB88044." evidence="4" ref="2">
    <original>K</original>
    <variation>T</variation>
    <location>
        <position position="359"/>
    </location>
</feature>
<feature type="sequence conflict" description="In Ref. 2; AAB88044." evidence="4" ref="2">
    <original>E</original>
    <variation>D</variation>
    <location>
        <position position="426"/>
    </location>
</feature>
<feature type="sequence conflict" description="In Ref. 2; AAB88044." evidence="4" ref="2">
    <original>T</original>
    <variation>K</variation>
    <location>
        <position position="492"/>
    </location>
</feature>
<feature type="sequence conflict" description="In Ref. 2; AAB88044." evidence="4" ref="2">
    <original>S</original>
    <variation>L</variation>
    <location>
        <position position="497"/>
    </location>
</feature>
<feature type="sequence conflict" description="In Ref. 2; AAB88044." evidence="4" ref="2">
    <original>F</original>
    <variation>C</variation>
    <location>
        <position position="524"/>
    </location>
</feature>
<comment type="function">
    <text>Apoptotic suppressor.</text>
</comment>
<comment type="subcellular location">
    <subcellularLocation>
        <location>Nucleus</location>
    </subcellularLocation>
    <subcellularLocation>
        <location>Cytoplasm</location>
    </subcellularLocation>
    <text>Predominantly nuclear. According to PubMed:9372964 it is cytoplasmic.</text>
</comment>
<comment type="tissue specificity">
    <text>Cells of the T-lymphocyte lineage. Found in both cortical and medullary cells of the thymus. Expressed at relatively high levels also in spleen, bursa, intestine and lung and at very low levels in testis, brain and skeletal muscle.</text>
</comment>
<comment type="induction">
    <text>High levels are induced within 4-8 hours of T-cell activation in spleen and thymus.</text>
</comment>
<comment type="domain">
    <text>The ring finger is important for its antiapoptotic effect.</text>
</comment>
<comment type="similarity">
    <text evidence="4">Belongs to the IAP family.</text>
</comment>